<name>RIMM_RHIWR</name>
<sequence length="157" mass="16665">MSSDRPIVLAAIIGAHGLQGEVRLKLFTEDMGAYRTLDGAGRSFTLKTIRPGPNGAVARFAEIGDRNAAEALRGTELSVPRSALPPLAPGEYYHVDLIGLPCLVDGAPVGVAAMVEDFGAGDVLEIEKPDGKRFMVPVAKAVTIEPDRLLIDPEFVE</sequence>
<feature type="chain" id="PRO_0000351798" description="Ribosome maturation factor RimM">
    <location>
        <begin position="1"/>
        <end position="157"/>
    </location>
</feature>
<feature type="domain" description="PRC barrel" evidence="1">
    <location>
        <begin position="89"/>
        <end position="156"/>
    </location>
</feature>
<keyword id="KW-0143">Chaperone</keyword>
<keyword id="KW-0963">Cytoplasm</keyword>
<keyword id="KW-1185">Reference proteome</keyword>
<keyword id="KW-0690">Ribosome biogenesis</keyword>
<keyword id="KW-0698">rRNA processing</keyword>
<accession>A5V9P8</accession>
<proteinExistence type="inferred from homology"/>
<evidence type="ECO:0000255" key="1">
    <source>
        <dbReference type="HAMAP-Rule" id="MF_00014"/>
    </source>
</evidence>
<comment type="function">
    <text evidence="1">An accessory protein needed during the final step in the assembly of 30S ribosomal subunit, possibly for assembly of the head region. Essential for efficient processing of 16S rRNA. May be needed both before and after RbfA during the maturation of 16S rRNA. It has affinity for free ribosomal 30S subunits but not for 70S ribosomes.</text>
</comment>
<comment type="subunit">
    <text evidence="1">Binds ribosomal protein uS19.</text>
</comment>
<comment type="subcellular location">
    <subcellularLocation>
        <location evidence="1">Cytoplasm</location>
    </subcellularLocation>
</comment>
<comment type="domain">
    <text evidence="1">The PRC barrel domain binds ribosomal protein uS19.</text>
</comment>
<comment type="similarity">
    <text evidence="1">Belongs to the RimM family.</text>
</comment>
<gene>
    <name evidence="1" type="primary">rimM</name>
    <name type="ordered locus">Swit_2658</name>
</gene>
<dbReference type="EMBL" id="CP000699">
    <property type="protein sequence ID" value="ABQ69014.1"/>
    <property type="molecule type" value="Genomic_DNA"/>
</dbReference>
<dbReference type="SMR" id="A5V9P8"/>
<dbReference type="STRING" id="392499.Swit_2658"/>
<dbReference type="PaxDb" id="392499-Swit_2658"/>
<dbReference type="KEGG" id="swi:Swit_2658"/>
<dbReference type="eggNOG" id="COG0806">
    <property type="taxonomic scope" value="Bacteria"/>
</dbReference>
<dbReference type="HOGENOM" id="CLU_077636_0_1_5"/>
<dbReference type="OrthoDB" id="9788191at2"/>
<dbReference type="Proteomes" id="UP000001989">
    <property type="component" value="Chromosome"/>
</dbReference>
<dbReference type="GO" id="GO:0005737">
    <property type="term" value="C:cytoplasm"/>
    <property type="evidence" value="ECO:0007669"/>
    <property type="project" value="UniProtKB-SubCell"/>
</dbReference>
<dbReference type="GO" id="GO:0005840">
    <property type="term" value="C:ribosome"/>
    <property type="evidence" value="ECO:0007669"/>
    <property type="project" value="InterPro"/>
</dbReference>
<dbReference type="GO" id="GO:0043022">
    <property type="term" value="F:ribosome binding"/>
    <property type="evidence" value="ECO:0007669"/>
    <property type="project" value="InterPro"/>
</dbReference>
<dbReference type="GO" id="GO:0042274">
    <property type="term" value="P:ribosomal small subunit biogenesis"/>
    <property type="evidence" value="ECO:0007669"/>
    <property type="project" value="UniProtKB-UniRule"/>
</dbReference>
<dbReference type="GO" id="GO:0006364">
    <property type="term" value="P:rRNA processing"/>
    <property type="evidence" value="ECO:0007669"/>
    <property type="project" value="UniProtKB-UniRule"/>
</dbReference>
<dbReference type="Gene3D" id="2.30.30.240">
    <property type="entry name" value="PRC-barrel domain"/>
    <property type="match status" value="1"/>
</dbReference>
<dbReference type="Gene3D" id="2.40.30.60">
    <property type="entry name" value="RimM"/>
    <property type="match status" value="1"/>
</dbReference>
<dbReference type="HAMAP" id="MF_00014">
    <property type="entry name" value="Ribosome_mat_RimM"/>
    <property type="match status" value="1"/>
</dbReference>
<dbReference type="InterPro" id="IPR011033">
    <property type="entry name" value="PRC_barrel-like_sf"/>
</dbReference>
<dbReference type="InterPro" id="IPR056792">
    <property type="entry name" value="PRC_RimM"/>
</dbReference>
<dbReference type="InterPro" id="IPR011961">
    <property type="entry name" value="RimM"/>
</dbReference>
<dbReference type="InterPro" id="IPR002676">
    <property type="entry name" value="RimM_N"/>
</dbReference>
<dbReference type="InterPro" id="IPR036976">
    <property type="entry name" value="RimM_N_sf"/>
</dbReference>
<dbReference type="InterPro" id="IPR009000">
    <property type="entry name" value="Transl_B-barrel_sf"/>
</dbReference>
<dbReference type="NCBIfam" id="TIGR02273">
    <property type="entry name" value="16S_RimM"/>
    <property type="match status" value="1"/>
</dbReference>
<dbReference type="PANTHER" id="PTHR33692">
    <property type="entry name" value="RIBOSOME MATURATION FACTOR RIMM"/>
    <property type="match status" value="1"/>
</dbReference>
<dbReference type="PANTHER" id="PTHR33692:SF1">
    <property type="entry name" value="RIBOSOME MATURATION FACTOR RIMM"/>
    <property type="match status" value="1"/>
</dbReference>
<dbReference type="Pfam" id="PF24986">
    <property type="entry name" value="PRC_RimM"/>
    <property type="match status" value="1"/>
</dbReference>
<dbReference type="Pfam" id="PF01782">
    <property type="entry name" value="RimM"/>
    <property type="match status" value="1"/>
</dbReference>
<dbReference type="SUPFAM" id="SSF50346">
    <property type="entry name" value="PRC-barrel domain"/>
    <property type="match status" value="1"/>
</dbReference>
<dbReference type="SUPFAM" id="SSF50447">
    <property type="entry name" value="Translation proteins"/>
    <property type="match status" value="1"/>
</dbReference>
<organism>
    <name type="scientific">Rhizorhabdus wittichii (strain DSM 6014 / CCUG 31198 / JCM 15750 / NBRC 105917 / EY 4224 / RW1)</name>
    <name type="common">Sphingomonas wittichii</name>
    <dbReference type="NCBI Taxonomy" id="392499"/>
    <lineage>
        <taxon>Bacteria</taxon>
        <taxon>Pseudomonadati</taxon>
        <taxon>Pseudomonadota</taxon>
        <taxon>Alphaproteobacteria</taxon>
        <taxon>Sphingomonadales</taxon>
        <taxon>Sphingomonadaceae</taxon>
        <taxon>Rhizorhabdus</taxon>
    </lineage>
</organism>
<protein>
    <recommendedName>
        <fullName evidence="1">Ribosome maturation factor RimM</fullName>
    </recommendedName>
</protein>
<reference key="1">
    <citation type="journal article" date="2010" name="J. Bacteriol.">
        <title>Genome sequence of the dioxin-mineralizing bacterium Sphingomonas wittichii RW1.</title>
        <authorList>
            <person name="Miller T.R."/>
            <person name="Delcher A.L."/>
            <person name="Salzberg S.L."/>
            <person name="Saunders E."/>
            <person name="Detter J.C."/>
            <person name="Halden R.U."/>
        </authorList>
    </citation>
    <scope>NUCLEOTIDE SEQUENCE [LARGE SCALE GENOMIC DNA]</scope>
    <source>
        <strain>DSM 6014 / CCUG 31198 / JCM 15750 / NBRC 105917 / EY 4224 / RW1</strain>
    </source>
</reference>